<sequence length="423" mass="46016">MLFERAKSVFPGGVNSPARALKHLPSPLVAKAASGAYLYTDRGKLVDYCMAFGAIILGHAHPRVKKAVEEQLEKGWIYALLTEQEVEFAERIRRHMPSVEKMRIVNTGTEATMSAIRAARGYTKRDVIIKFEGNFHGSHDYVLVKAGSGAATWGIPTSAGIPQEVARLTVVVPYNDIDAFIKAVREVGDRLAAVIVEPVAGNYGLIIPDVEFLKALREETQRAGALLIFDEVITGFRVGLGGAQGLFGIRPDLTTLGKVVGGGFPIGIFGGRGEVMDLVAPSGPVYNAGTYNAHPVSIAAGLAVLKELETGEPYRIANEAAERLAKGVEDVAGRLGFDVVVKRMASMFQFYFKKGDVKTPQDVRESNEKMYLKLHEIALKHGVYLTPSQYEVNFTSAAHGREVVEETLAALEKSFQELQREIG</sequence>
<keyword id="KW-0963">Cytoplasm</keyword>
<keyword id="KW-0413">Isomerase</keyword>
<keyword id="KW-0627">Porphyrin biosynthesis</keyword>
<keyword id="KW-0663">Pyridoxal phosphate</keyword>
<keyword id="KW-1185">Reference proteome</keyword>
<reference key="1">
    <citation type="journal article" date="2002" name="Proc. Natl. Acad. Sci. U.S.A.">
        <title>Genome sequence of the hyperthermophilic crenarchaeon Pyrobaculum aerophilum.</title>
        <authorList>
            <person name="Fitz-Gibbon S.T."/>
            <person name="Ladner H."/>
            <person name="Kim U.-J."/>
            <person name="Stetter K.O."/>
            <person name="Simon M.I."/>
            <person name="Miller J.H."/>
        </authorList>
    </citation>
    <scope>NUCLEOTIDE SEQUENCE [LARGE SCALE GENOMIC DNA]</scope>
    <source>
        <strain>ATCC 51768 / DSM 7523 / JCM 9630 / CIP 104966 / NBRC 100827 / IM2</strain>
    </source>
</reference>
<protein>
    <recommendedName>
        <fullName evidence="1">Glutamate-1-semialdehyde 2,1-aminomutase</fullName>
        <shortName evidence="1">GSA</shortName>
        <ecNumber evidence="1">5.4.3.8</ecNumber>
    </recommendedName>
    <alternativeName>
        <fullName evidence="1">Glutamate-1-semialdehyde aminotransferase</fullName>
        <shortName evidence="1">GSA-AT</shortName>
    </alternativeName>
</protein>
<proteinExistence type="inferred from homology"/>
<comment type="catalytic activity">
    <reaction evidence="1">
        <text>(S)-4-amino-5-oxopentanoate = 5-aminolevulinate</text>
        <dbReference type="Rhea" id="RHEA:14265"/>
        <dbReference type="ChEBI" id="CHEBI:57501"/>
        <dbReference type="ChEBI" id="CHEBI:356416"/>
        <dbReference type="EC" id="5.4.3.8"/>
    </reaction>
</comment>
<comment type="cofactor">
    <cofactor evidence="1">
        <name>pyridoxal 5'-phosphate</name>
        <dbReference type="ChEBI" id="CHEBI:597326"/>
    </cofactor>
</comment>
<comment type="pathway">
    <text evidence="1">Porphyrin-containing compound metabolism; protoporphyrin-IX biosynthesis; 5-aminolevulinate from L-glutamyl-tRNA(Glu): step 2/2.</text>
</comment>
<comment type="subcellular location">
    <subcellularLocation>
        <location evidence="1">Cytoplasm</location>
    </subcellularLocation>
</comment>
<comment type="similarity">
    <text evidence="1">Belongs to the class-III pyridoxal-phosphate-dependent aminotransferase family. HemL subfamily.</text>
</comment>
<name>GSA_PYRAE</name>
<dbReference type="EC" id="5.4.3.8" evidence="1"/>
<dbReference type="EMBL" id="AE009441">
    <property type="protein sequence ID" value="AAL62882.1"/>
    <property type="molecule type" value="Genomic_DNA"/>
</dbReference>
<dbReference type="RefSeq" id="WP_011007354.1">
    <property type="nucleotide sequence ID" value="NC_003364.1"/>
</dbReference>
<dbReference type="SMR" id="Q8ZYW1"/>
<dbReference type="FunCoup" id="Q8ZYW1">
    <property type="interactions" value="124"/>
</dbReference>
<dbReference type="STRING" id="178306.PAE0594"/>
<dbReference type="EnsemblBacteria" id="AAL62882">
    <property type="protein sequence ID" value="AAL62882"/>
    <property type="gene ID" value="PAE0594"/>
</dbReference>
<dbReference type="GeneID" id="1465106"/>
<dbReference type="KEGG" id="pai:PAE0594"/>
<dbReference type="PATRIC" id="fig|178306.9.peg.426"/>
<dbReference type="eggNOG" id="arCOG00918">
    <property type="taxonomic scope" value="Archaea"/>
</dbReference>
<dbReference type="HOGENOM" id="CLU_016922_1_5_2"/>
<dbReference type="InParanoid" id="Q8ZYW1"/>
<dbReference type="UniPathway" id="UPA00251">
    <property type="reaction ID" value="UER00317"/>
</dbReference>
<dbReference type="Proteomes" id="UP000002439">
    <property type="component" value="Chromosome"/>
</dbReference>
<dbReference type="GO" id="GO:0005737">
    <property type="term" value="C:cytoplasm"/>
    <property type="evidence" value="ECO:0007669"/>
    <property type="project" value="UniProtKB-SubCell"/>
</dbReference>
<dbReference type="GO" id="GO:0042286">
    <property type="term" value="F:glutamate-1-semialdehyde 2,1-aminomutase activity"/>
    <property type="evidence" value="ECO:0007669"/>
    <property type="project" value="UniProtKB-UniRule"/>
</dbReference>
<dbReference type="GO" id="GO:0030170">
    <property type="term" value="F:pyridoxal phosphate binding"/>
    <property type="evidence" value="ECO:0007669"/>
    <property type="project" value="InterPro"/>
</dbReference>
<dbReference type="GO" id="GO:0008483">
    <property type="term" value="F:transaminase activity"/>
    <property type="evidence" value="ECO:0007669"/>
    <property type="project" value="InterPro"/>
</dbReference>
<dbReference type="GO" id="GO:0006782">
    <property type="term" value="P:protoporphyrinogen IX biosynthetic process"/>
    <property type="evidence" value="ECO:0007669"/>
    <property type="project" value="UniProtKB-UniRule"/>
</dbReference>
<dbReference type="CDD" id="cd00610">
    <property type="entry name" value="OAT_like"/>
    <property type="match status" value="1"/>
</dbReference>
<dbReference type="FunFam" id="3.40.640.10:FF:000021">
    <property type="entry name" value="Glutamate-1-semialdehyde 2,1-aminomutase"/>
    <property type="match status" value="1"/>
</dbReference>
<dbReference type="Gene3D" id="3.90.1150.10">
    <property type="entry name" value="Aspartate Aminotransferase, domain 1"/>
    <property type="match status" value="1"/>
</dbReference>
<dbReference type="Gene3D" id="3.40.640.10">
    <property type="entry name" value="Type I PLP-dependent aspartate aminotransferase-like (Major domain)"/>
    <property type="match status" value="1"/>
</dbReference>
<dbReference type="HAMAP" id="MF_00375">
    <property type="entry name" value="HemL_aminotrans_3"/>
    <property type="match status" value="1"/>
</dbReference>
<dbReference type="InterPro" id="IPR004639">
    <property type="entry name" value="4pyrrol_synth_GluAld_NH2Trfase"/>
</dbReference>
<dbReference type="InterPro" id="IPR005814">
    <property type="entry name" value="Aminotrans_3"/>
</dbReference>
<dbReference type="InterPro" id="IPR049704">
    <property type="entry name" value="Aminotrans_3_PPA_site"/>
</dbReference>
<dbReference type="InterPro" id="IPR015424">
    <property type="entry name" value="PyrdxlP-dep_Trfase"/>
</dbReference>
<dbReference type="InterPro" id="IPR015421">
    <property type="entry name" value="PyrdxlP-dep_Trfase_major"/>
</dbReference>
<dbReference type="InterPro" id="IPR015422">
    <property type="entry name" value="PyrdxlP-dep_Trfase_small"/>
</dbReference>
<dbReference type="NCBIfam" id="TIGR00713">
    <property type="entry name" value="hemL"/>
    <property type="match status" value="1"/>
</dbReference>
<dbReference type="NCBIfam" id="NF000818">
    <property type="entry name" value="PRK00062.1"/>
    <property type="match status" value="1"/>
</dbReference>
<dbReference type="PANTHER" id="PTHR43713">
    <property type="entry name" value="GLUTAMATE-1-SEMIALDEHYDE 2,1-AMINOMUTASE"/>
    <property type="match status" value="1"/>
</dbReference>
<dbReference type="PANTHER" id="PTHR43713:SF3">
    <property type="entry name" value="GLUTAMATE-1-SEMIALDEHYDE 2,1-AMINOMUTASE 1, CHLOROPLASTIC-RELATED"/>
    <property type="match status" value="1"/>
</dbReference>
<dbReference type="Pfam" id="PF00202">
    <property type="entry name" value="Aminotran_3"/>
    <property type="match status" value="1"/>
</dbReference>
<dbReference type="SUPFAM" id="SSF53383">
    <property type="entry name" value="PLP-dependent transferases"/>
    <property type="match status" value="1"/>
</dbReference>
<dbReference type="PROSITE" id="PS00600">
    <property type="entry name" value="AA_TRANSFER_CLASS_3"/>
    <property type="match status" value="1"/>
</dbReference>
<evidence type="ECO:0000255" key="1">
    <source>
        <dbReference type="HAMAP-Rule" id="MF_00375"/>
    </source>
</evidence>
<gene>
    <name evidence="1" type="primary">hemL</name>
    <name type="ordered locus">PAE0594</name>
</gene>
<accession>Q8ZYW1</accession>
<organism>
    <name type="scientific">Pyrobaculum aerophilum (strain ATCC 51768 / DSM 7523 / JCM 9630 / CIP 104966 / NBRC 100827 / IM2)</name>
    <dbReference type="NCBI Taxonomy" id="178306"/>
    <lineage>
        <taxon>Archaea</taxon>
        <taxon>Thermoproteota</taxon>
        <taxon>Thermoprotei</taxon>
        <taxon>Thermoproteales</taxon>
        <taxon>Thermoproteaceae</taxon>
        <taxon>Pyrobaculum</taxon>
    </lineage>
</organism>
<feature type="chain" id="PRO_0000120488" description="Glutamate-1-semialdehyde 2,1-aminomutase">
    <location>
        <begin position="1"/>
        <end position="423"/>
    </location>
</feature>
<feature type="modified residue" description="N6-(pyridoxal phosphate)lysine" evidence="1">
    <location>
        <position position="258"/>
    </location>
</feature>